<organism>
    <name type="scientific">Xenopus tropicalis</name>
    <name type="common">Western clawed frog</name>
    <name type="synonym">Silurana tropicalis</name>
    <dbReference type="NCBI Taxonomy" id="8364"/>
    <lineage>
        <taxon>Eukaryota</taxon>
        <taxon>Metazoa</taxon>
        <taxon>Chordata</taxon>
        <taxon>Craniata</taxon>
        <taxon>Vertebrata</taxon>
        <taxon>Euteleostomi</taxon>
        <taxon>Amphibia</taxon>
        <taxon>Batrachia</taxon>
        <taxon>Anura</taxon>
        <taxon>Pipoidea</taxon>
        <taxon>Pipidae</taxon>
        <taxon>Xenopodinae</taxon>
        <taxon>Xenopus</taxon>
        <taxon>Silurana</taxon>
    </lineage>
</organism>
<accession>Q07G98</accession>
<protein>
    <recommendedName>
        <fullName>COP9 signalosome complex subunit 6</fullName>
        <shortName>Signalosome subunit 6</shortName>
    </recommendedName>
</protein>
<gene>
    <name type="primary">cops6</name>
    <name type="synonym">csn6</name>
    <name type="ORF">TNeu117c08.1</name>
</gene>
<proteinExistence type="evidence at transcript level"/>
<feature type="chain" id="PRO_0000331509" description="COP9 signalosome complex subunit 6">
    <location>
        <begin position="1"/>
        <end position="319"/>
    </location>
</feature>
<feature type="domain" description="MPN" evidence="2">
    <location>
        <begin position="33"/>
        <end position="166"/>
    </location>
</feature>
<comment type="function">
    <text evidence="1">Component of the COP9 signalosome complex (CSN), a complex involved in various cellular and developmental processes (By similarity). The CSN complex is an essential regulator of the ubiquitin (Ubl) conjugation pathway by mediating the deneddylation of the cullin subunits of E3 ligase complexes, leading to modify the Ubl ligase activity (By similarity).</text>
</comment>
<comment type="subunit">
    <text evidence="1">Component of the CSN complex, probably composed of cops1, cops2, cops3, cops4, cops5, cops6, cops7, cops8 and cops9.</text>
</comment>
<comment type="subcellular location">
    <subcellularLocation>
        <location evidence="1">Cytoplasm</location>
    </subcellularLocation>
    <subcellularLocation>
        <location evidence="1">Nucleus</location>
    </subcellularLocation>
</comment>
<comment type="similarity">
    <text evidence="3">Belongs to the peptidase M67A family. CSN6 subfamily.</text>
</comment>
<comment type="caution">
    <text evidence="3">Although related to the peptidase M67A family, it lacks the JAMM motif that probably constitutes the catalytic center and therefore it probably does not have a protease activity.</text>
</comment>
<dbReference type="EMBL" id="CR760300">
    <property type="protein sequence ID" value="CAL49407.1"/>
    <property type="molecule type" value="mRNA"/>
</dbReference>
<dbReference type="RefSeq" id="NP_001265456.1">
    <property type="nucleotide sequence ID" value="NM_001278527.1"/>
</dbReference>
<dbReference type="SMR" id="Q07G98"/>
<dbReference type="FunCoup" id="Q07G98">
    <property type="interactions" value="3499"/>
</dbReference>
<dbReference type="STRING" id="8364.ENSXETP00000050248"/>
<dbReference type="PaxDb" id="8364-ENSXETP00000019968"/>
<dbReference type="DNASU" id="448375"/>
<dbReference type="GeneID" id="448375"/>
<dbReference type="KEGG" id="xtr:448375"/>
<dbReference type="AGR" id="Xenbase:XB-GENE-947827"/>
<dbReference type="CTD" id="10980"/>
<dbReference type="Xenbase" id="XB-GENE-947827">
    <property type="gene designation" value="cops6"/>
</dbReference>
<dbReference type="eggNOG" id="KOG3050">
    <property type="taxonomic scope" value="Eukaryota"/>
</dbReference>
<dbReference type="InParanoid" id="Q07G98"/>
<dbReference type="OMA" id="LVGWWST"/>
<dbReference type="OrthoDB" id="1378at2759"/>
<dbReference type="Proteomes" id="UP000008143">
    <property type="component" value="Chromosome 3"/>
</dbReference>
<dbReference type="GO" id="GO:0008180">
    <property type="term" value="C:COP9 signalosome"/>
    <property type="evidence" value="ECO:0007669"/>
    <property type="project" value="UniProtKB-KW"/>
</dbReference>
<dbReference type="GO" id="GO:0005737">
    <property type="term" value="C:cytoplasm"/>
    <property type="evidence" value="ECO:0007669"/>
    <property type="project" value="UniProtKB-SubCell"/>
</dbReference>
<dbReference type="GO" id="GO:0008237">
    <property type="term" value="F:metallopeptidase activity"/>
    <property type="evidence" value="ECO:0007669"/>
    <property type="project" value="InterPro"/>
</dbReference>
<dbReference type="GO" id="GO:0000338">
    <property type="term" value="P:protein deneddylation"/>
    <property type="evidence" value="ECO:0007669"/>
    <property type="project" value="InterPro"/>
</dbReference>
<dbReference type="CDD" id="cd08063">
    <property type="entry name" value="MPN_CSN6"/>
    <property type="match status" value="1"/>
</dbReference>
<dbReference type="FunFam" id="3.40.140.10:FF:000017">
    <property type="entry name" value="COP9 signalosome complex subunit 6"/>
    <property type="match status" value="1"/>
</dbReference>
<dbReference type="Gene3D" id="3.40.140.10">
    <property type="entry name" value="Cytidine Deaminase, domain 2"/>
    <property type="match status" value="1"/>
</dbReference>
<dbReference type="InterPro" id="IPR024969">
    <property type="entry name" value="EIF3F/CSN6-like_C"/>
</dbReference>
<dbReference type="InterPro" id="IPR000555">
    <property type="entry name" value="JAMM/MPN+_dom"/>
</dbReference>
<dbReference type="InterPro" id="IPR037518">
    <property type="entry name" value="MPN"/>
</dbReference>
<dbReference type="InterPro" id="IPR033859">
    <property type="entry name" value="MPN_CSN6"/>
</dbReference>
<dbReference type="PANTHER" id="PTHR10540:SF8">
    <property type="entry name" value="COP9 SIGNALOSOME COMPLEX SUBUNIT 6"/>
    <property type="match status" value="1"/>
</dbReference>
<dbReference type="PANTHER" id="PTHR10540">
    <property type="entry name" value="EUKARYOTIC TRANSLATION INITIATION FACTOR 3 SUBUNIT F-RELATED"/>
    <property type="match status" value="1"/>
</dbReference>
<dbReference type="Pfam" id="PF01398">
    <property type="entry name" value="JAB"/>
    <property type="match status" value="1"/>
</dbReference>
<dbReference type="Pfam" id="PF13012">
    <property type="entry name" value="MitMem_reg"/>
    <property type="match status" value="1"/>
</dbReference>
<dbReference type="SMART" id="SM00232">
    <property type="entry name" value="JAB_MPN"/>
    <property type="match status" value="1"/>
</dbReference>
<dbReference type="PROSITE" id="PS50249">
    <property type="entry name" value="MPN"/>
    <property type="match status" value="1"/>
</dbReference>
<evidence type="ECO:0000250" key="1">
    <source>
        <dbReference type="UniProtKB" id="Q7L5N1"/>
    </source>
</evidence>
<evidence type="ECO:0000255" key="2">
    <source>
        <dbReference type="PROSITE-ProRule" id="PRU01182"/>
    </source>
</evidence>
<evidence type="ECO:0000305" key="3"/>
<reference key="1">
    <citation type="submission" date="2006-10" db="EMBL/GenBank/DDBJ databases">
        <authorList>
            <consortium name="Sanger Xenopus tropicalis EST/cDNA project"/>
        </authorList>
    </citation>
    <scope>NUCLEOTIDE SEQUENCE [LARGE SCALE MRNA]</scope>
    <source>
        <tissue>Neurula</tissue>
    </source>
</reference>
<name>CSN6_XENTR</name>
<sequence length="319" mass="35655">MAAAAASNGSGMEVDVAAFPTVMAQGVTGSVTVALHPLVILNISDHWIRMRSQEGRPVQVIGALIGKQEGRNIEVMNSFELLSQINEEKITINKEYYYTKEEQFKQVFKDMEFLGWYTTGGTPDPSDIHVHKQVCEIIESPLFLKLNPMTKHTDLPVSVYESVIDIVNGEATMLLAELSYTLATEEAERIGVDHVARMTATGSGENSTVAEHLIAQHSAIKMLHSRVRLILEYVRAAEAGEVPFNHEILREASALCHCLPVLSTDKFKMDFYDQCNDVGLMSYLGTITKTCNTMNQFVNKFNILYDRQGIGRRMRGLFF</sequence>
<keyword id="KW-0963">Cytoplasm</keyword>
<keyword id="KW-0539">Nucleus</keyword>
<keyword id="KW-1185">Reference proteome</keyword>
<keyword id="KW-0736">Signalosome</keyword>